<organism>
    <name type="scientific">Acinetobacter baumannii (strain ACICU)</name>
    <dbReference type="NCBI Taxonomy" id="405416"/>
    <lineage>
        <taxon>Bacteria</taxon>
        <taxon>Pseudomonadati</taxon>
        <taxon>Pseudomonadota</taxon>
        <taxon>Gammaproteobacteria</taxon>
        <taxon>Moraxellales</taxon>
        <taxon>Moraxellaceae</taxon>
        <taxon>Acinetobacter</taxon>
        <taxon>Acinetobacter calcoaceticus/baumannii complex</taxon>
    </lineage>
</organism>
<name>NUSB_ACIBC</name>
<feature type="chain" id="PRO_1000092517" description="Transcription antitermination protein NusB">
    <location>
        <begin position="1"/>
        <end position="149"/>
    </location>
</feature>
<gene>
    <name evidence="1" type="primary">nusB</name>
    <name type="ordered locus">ACICU_03590</name>
</gene>
<accession>B2I2B2</accession>
<proteinExistence type="inferred from homology"/>
<reference key="1">
    <citation type="journal article" date="2008" name="Antimicrob. Agents Chemother.">
        <title>Whole-genome pyrosequencing of an epidemic multidrug-resistant Acinetobacter baumannii strain belonging to the European clone II group.</title>
        <authorList>
            <person name="Iacono M."/>
            <person name="Villa L."/>
            <person name="Fortini D."/>
            <person name="Bordoni R."/>
            <person name="Imperi F."/>
            <person name="Bonnal R.J."/>
            <person name="Sicheritz-Ponten T."/>
            <person name="De Bellis G."/>
            <person name="Visca P."/>
            <person name="Cassone A."/>
            <person name="Carattoli A."/>
        </authorList>
    </citation>
    <scope>NUCLEOTIDE SEQUENCE [LARGE SCALE GENOMIC DNA]</scope>
    <source>
        <strain>ACICU</strain>
    </source>
</reference>
<protein>
    <recommendedName>
        <fullName evidence="1">Transcription antitermination protein NusB</fullName>
    </recommendedName>
    <alternativeName>
        <fullName evidence="1">Antitermination factor NusB</fullName>
    </alternativeName>
</protein>
<dbReference type="EMBL" id="CP000863">
    <property type="protein sequence ID" value="ACC58899.1"/>
    <property type="molecule type" value="Genomic_DNA"/>
</dbReference>
<dbReference type="RefSeq" id="WP_000084188.1">
    <property type="nucleotide sequence ID" value="NZ_CP031380.1"/>
</dbReference>
<dbReference type="SMR" id="B2I2B2"/>
<dbReference type="GeneID" id="92895632"/>
<dbReference type="KEGG" id="abc:ACICU_03590"/>
<dbReference type="HOGENOM" id="CLU_087843_4_1_6"/>
<dbReference type="Proteomes" id="UP000008839">
    <property type="component" value="Chromosome"/>
</dbReference>
<dbReference type="GO" id="GO:0005829">
    <property type="term" value="C:cytosol"/>
    <property type="evidence" value="ECO:0007669"/>
    <property type="project" value="TreeGrafter"/>
</dbReference>
<dbReference type="GO" id="GO:0003723">
    <property type="term" value="F:RNA binding"/>
    <property type="evidence" value="ECO:0007669"/>
    <property type="project" value="UniProtKB-UniRule"/>
</dbReference>
<dbReference type="GO" id="GO:0006353">
    <property type="term" value="P:DNA-templated transcription termination"/>
    <property type="evidence" value="ECO:0007669"/>
    <property type="project" value="UniProtKB-UniRule"/>
</dbReference>
<dbReference type="GO" id="GO:0031564">
    <property type="term" value="P:transcription antitermination"/>
    <property type="evidence" value="ECO:0007669"/>
    <property type="project" value="UniProtKB-KW"/>
</dbReference>
<dbReference type="Gene3D" id="1.10.940.10">
    <property type="entry name" value="NusB-like"/>
    <property type="match status" value="1"/>
</dbReference>
<dbReference type="HAMAP" id="MF_00073">
    <property type="entry name" value="NusB"/>
    <property type="match status" value="1"/>
</dbReference>
<dbReference type="InterPro" id="IPR035926">
    <property type="entry name" value="NusB-like_sf"/>
</dbReference>
<dbReference type="InterPro" id="IPR011605">
    <property type="entry name" value="NusB_fam"/>
</dbReference>
<dbReference type="InterPro" id="IPR006027">
    <property type="entry name" value="NusB_RsmB_TIM44"/>
</dbReference>
<dbReference type="NCBIfam" id="TIGR01951">
    <property type="entry name" value="nusB"/>
    <property type="match status" value="1"/>
</dbReference>
<dbReference type="PANTHER" id="PTHR11078:SF3">
    <property type="entry name" value="ANTITERMINATION NUSB DOMAIN-CONTAINING PROTEIN"/>
    <property type="match status" value="1"/>
</dbReference>
<dbReference type="PANTHER" id="PTHR11078">
    <property type="entry name" value="N UTILIZATION SUBSTANCE PROTEIN B-RELATED"/>
    <property type="match status" value="1"/>
</dbReference>
<dbReference type="Pfam" id="PF01029">
    <property type="entry name" value="NusB"/>
    <property type="match status" value="1"/>
</dbReference>
<dbReference type="SUPFAM" id="SSF48013">
    <property type="entry name" value="NusB-like"/>
    <property type="match status" value="1"/>
</dbReference>
<keyword id="KW-0694">RNA-binding</keyword>
<keyword id="KW-0804">Transcription</keyword>
<keyword id="KW-0889">Transcription antitermination</keyword>
<keyword id="KW-0805">Transcription regulation</keyword>
<evidence type="ECO:0000255" key="1">
    <source>
        <dbReference type="HAMAP-Rule" id="MF_00073"/>
    </source>
</evidence>
<comment type="function">
    <text evidence="1">Involved in transcription antitermination. Required for transcription of ribosomal RNA (rRNA) genes. Binds specifically to the boxA antiterminator sequence of the ribosomal RNA (rrn) operons.</text>
</comment>
<comment type="similarity">
    <text evidence="1">Belongs to the NusB family.</text>
</comment>
<sequence length="149" mass="17017">MSQTLQAAYAAKRKARRFAVQGIYEWQMSHNPVHEIEARTRAENAMHKVDLNYYHELLTQVIAQHEDLDALLIPVLDREIDALDGVELATLRLGAYELRDHLEIPYRVVLDEAIELAKHFGGADSHKYINGVLDRLSSTLRSAEKQQAK</sequence>